<accession>A6QC00</accession>
<feature type="chain" id="PRO_1000000022" description="Aspartate carbamoyltransferase catalytic subunit">
    <location>
        <begin position="1"/>
        <end position="294"/>
    </location>
</feature>
<feature type="binding site" evidence="1">
    <location>
        <position position="49"/>
    </location>
    <ligand>
        <name>carbamoyl phosphate</name>
        <dbReference type="ChEBI" id="CHEBI:58228"/>
    </ligand>
</feature>
<feature type="binding site" evidence="1">
    <location>
        <position position="50"/>
    </location>
    <ligand>
        <name>carbamoyl phosphate</name>
        <dbReference type="ChEBI" id="CHEBI:58228"/>
    </ligand>
</feature>
<feature type="binding site" evidence="1">
    <location>
        <position position="77"/>
    </location>
    <ligand>
        <name>L-aspartate</name>
        <dbReference type="ChEBI" id="CHEBI:29991"/>
    </ligand>
</feature>
<feature type="binding site" evidence="1">
    <location>
        <position position="99"/>
    </location>
    <ligand>
        <name>carbamoyl phosphate</name>
        <dbReference type="ChEBI" id="CHEBI:58228"/>
    </ligand>
</feature>
<feature type="binding site" evidence="1">
    <location>
        <position position="127"/>
    </location>
    <ligand>
        <name>carbamoyl phosphate</name>
        <dbReference type="ChEBI" id="CHEBI:58228"/>
    </ligand>
</feature>
<feature type="binding site" evidence="1">
    <location>
        <position position="130"/>
    </location>
    <ligand>
        <name>carbamoyl phosphate</name>
        <dbReference type="ChEBI" id="CHEBI:58228"/>
    </ligand>
</feature>
<feature type="binding site" evidence="1">
    <location>
        <position position="161"/>
    </location>
    <ligand>
        <name>L-aspartate</name>
        <dbReference type="ChEBI" id="CHEBI:29991"/>
    </ligand>
</feature>
<feature type="binding site" evidence="1">
    <location>
        <position position="211"/>
    </location>
    <ligand>
        <name>L-aspartate</name>
        <dbReference type="ChEBI" id="CHEBI:29991"/>
    </ligand>
</feature>
<feature type="binding site" evidence="1">
    <location>
        <position position="250"/>
    </location>
    <ligand>
        <name>carbamoyl phosphate</name>
        <dbReference type="ChEBI" id="CHEBI:58228"/>
    </ligand>
</feature>
<feature type="binding site" evidence="1">
    <location>
        <position position="251"/>
    </location>
    <ligand>
        <name>carbamoyl phosphate</name>
        <dbReference type="ChEBI" id="CHEBI:58228"/>
    </ligand>
</feature>
<sequence length="294" mass="32953">MQHLVDTSNFSDAQIVQLLHDAKTFKAQRPPQLLRDKLIITLFFEASTRTRSSFEVAAKRLGAAVVHLDPSRSSTKKGESLEDTFANLCAMDPDGVIIRHEENEAPGILADMQMTSVINAGAGNYAHPTQALLDLFTLMEHFEGNIEGKTIAIVGDIISSRVASSGIRLLRRMGMNVILVAPEPFMPQSDLPQYENLEDVLDKVDVIMSLRAQLERHASPIFDDYNEYARHYCITEERLGDRNILILHPGPVMRNIDISDEILEDPRCKVLTQVKNGVYMRMAILKLLLLDSNN</sequence>
<proteinExistence type="inferred from homology"/>
<comment type="function">
    <text evidence="1">Catalyzes the condensation of carbamoyl phosphate and aspartate to form carbamoyl aspartate and inorganic phosphate, the committed step in the de novo pyrimidine nucleotide biosynthesis pathway.</text>
</comment>
<comment type="catalytic activity">
    <reaction evidence="1">
        <text>carbamoyl phosphate + L-aspartate = N-carbamoyl-L-aspartate + phosphate + H(+)</text>
        <dbReference type="Rhea" id="RHEA:20013"/>
        <dbReference type="ChEBI" id="CHEBI:15378"/>
        <dbReference type="ChEBI" id="CHEBI:29991"/>
        <dbReference type="ChEBI" id="CHEBI:32814"/>
        <dbReference type="ChEBI" id="CHEBI:43474"/>
        <dbReference type="ChEBI" id="CHEBI:58228"/>
        <dbReference type="EC" id="2.1.3.2"/>
    </reaction>
</comment>
<comment type="pathway">
    <text evidence="1">Pyrimidine metabolism; UMP biosynthesis via de novo pathway; (S)-dihydroorotate from bicarbonate: step 2/3.</text>
</comment>
<comment type="subunit">
    <text evidence="1">Heterododecamer (2C3:3R2) of six catalytic PyrB chains organized as two trimers (C3), and six regulatory PyrI chains organized as three dimers (R2).</text>
</comment>
<comment type="similarity">
    <text evidence="1">Belongs to the aspartate/ornithine carbamoyltransferase superfamily. ATCase family.</text>
</comment>
<protein>
    <recommendedName>
        <fullName evidence="1">Aspartate carbamoyltransferase catalytic subunit</fullName>
        <ecNumber evidence="1">2.1.3.2</ecNumber>
    </recommendedName>
    <alternativeName>
        <fullName evidence="1">Aspartate transcarbamylase</fullName>
        <shortName evidence="1">ATCase</shortName>
    </alternativeName>
</protein>
<reference key="1">
    <citation type="journal article" date="2007" name="Proc. Natl. Acad. Sci. U.S.A.">
        <title>Deep-sea vent epsilon-proteobacterial genomes provide insights into emergence of pathogens.</title>
        <authorList>
            <person name="Nakagawa S."/>
            <person name="Takaki Y."/>
            <person name="Shimamura S."/>
            <person name="Reysenbach A.-L."/>
            <person name="Takai K."/>
            <person name="Horikoshi K."/>
        </authorList>
    </citation>
    <scope>NUCLEOTIDE SEQUENCE [LARGE SCALE GENOMIC DNA]</scope>
    <source>
        <strain>NBC37-1</strain>
    </source>
</reference>
<name>PYRB_SULNB</name>
<gene>
    <name evidence="1" type="primary">pyrB</name>
    <name type="ordered locus">SUN_2068</name>
</gene>
<dbReference type="EC" id="2.1.3.2" evidence="1"/>
<dbReference type="EMBL" id="AP009179">
    <property type="protein sequence ID" value="BAF73009.1"/>
    <property type="molecule type" value="Genomic_DNA"/>
</dbReference>
<dbReference type="RefSeq" id="WP_012083833.1">
    <property type="nucleotide sequence ID" value="NC_009663.1"/>
</dbReference>
<dbReference type="SMR" id="A6QC00"/>
<dbReference type="STRING" id="387093.SUN_2068"/>
<dbReference type="KEGG" id="sun:SUN_2068"/>
<dbReference type="eggNOG" id="COG0540">
    <property type="taxonomic scope" value="Bacteria"/>
</dbReference>
<dbReference type="HOGENOM" id="CLU_043846_2_0_7"/>
<dbReference type="OrthoDB" id="9774690at2"/>
<dbReference type="UniPathway" id="UPA00070">
    <property type="reaction ID" value="UER00116"/>
</dbReference>
<dbReference type="Proteomes" id="UP000006378">
    <property type="component" value="Chromosome"/>
</dbReference>
<dbReference type="GO" id="GO:0005829">
    <property type="term" value="C:cytosol"/>
    <property type="evidence" value="ECO:0007669"/>
    <property type="project" value="TreeGrafter"/>
</dbReference>
<dbReference type="GO" id="GO:0016597">
    <property type="term" value="F:amino acid binding"/>
    <property type="evidence" value="ECO:0007669"/>
    <property type="project" value="InterPro"/>
</dbReference>
<dbReference type="GO" id="GO:0004070">
    <property type="term" value="F:aspartate carbamoyltransferase activity"/>
    <property type="evidence" value="ECO:0007669"/>
    <property type="project" value="UniProtKB-UniRule"/>
</dbReference>
<dbReference type="GO" id="GO:0006207">
    <property type="term" value="P:'de novo' pyrimidine nucleobase biosynthetic process"/>
    <property type="evidence" value="ECO:0007669"/>
    <property type="project" value="InterPro"/>
</dbReference>
<dbReference type="GO" id="GO:0044205">
    <property type="term" value="P:'de novo' UMP biosynthetic process"/>
    <property type="evidence" value="ECO:0007669"/>
    <property type="project" value="UniProtKB-UniRule"/>
</dbReference>
<dbReference type="GO" id="GO:0006520">
    <property type="term" value="P:amino acid metabolic process"/>
    <property type="evidence" value="ECO:0007669"/>
    <property type="project" value="InterPro"/>
</dbReference>
<dbReference type="Gene3D" id="3.40.50.1370">
    <property type="entry name" value="Aspartate/ornithine carbamoyltransferase"/>
    <property type="match status" value="2"/>
</dbReference>
<dbReference type="HAMAP" id="MF_00001">
    <property type="entry name" value="Asp_carb_tr"/>
    <property type="match status" value="1"/>
</dbReference>
<dbReference type="InterPro" id="IPR006132">
    <property type="entry name" value="Asp/Orn_carbamoyltranf_P-bd"/>
</dbReference>
<dbReference type="InterPro" id="IPR006130">
    <property type="entry name" value="Asp/Orn_carbamoylTrfase"/>
</dbReference>
<dbReference type="InterPro" id="IPR036901">
    <property type="entry name" value="Asp/Orn_carbamoylTrfase_sf"/>
</dbReference>
<dbReference type="InterPro" id="IPR002082">
    <property type="entry name" value="Asp_carbamoyltransf"/>
</dbReference>
<dbReference type="InterPro" id="IPR006131">
    <property type="entry name" value="Asp_carbamoyltransf_Asp/Orn-bd"/>
</dbReference>
<dbReference type="NCBIfam" id="TIGR00670">
    <property type="entry name" value="asp_carb_tr"/>
    <property type="match status" value="1"/>
</dbReference>
<dbReference type="NCBIfam" id="NF002032">
    <property type="entry name" value="PRK00856.1"/>
    <property type="match status" value="1"/>
</dbReference>
<dbReference type="PANTHER" id="PTHR45753:SF6">
    <property type="entry name" value="ASPARTATE CARBAMOYLTRANSFERASE"/>
    <property type="match status" value="1"/>
</dbReference>
<dbReference type="PANTHER" id="PTHR45753">
    <property type="entry name" value="ORNITHINE CARBAMOYLTRANSFERASE, MITOCHONDRIAL"/>
    <property type="match status" value="1"/>
</dbReference>
<dbReference type="Pfam" id="PF00185">
    <property type="entry name" value="OTCace"/>
    <property type="match status" value="1"/>
</dbReference>
<dbReference type="Pfam" id="PF02729">
    <property type="entry name" value="OTCace_N"/>
    <property type="match status" value="1"/>
</dbReference>
<dbReference type="PRINTS" id="PR00100">
    <property type="entry name" value="AOTCASE"/>
</dbReference>
<dbReference type="PRINTS" id="PR00101">
    <property type="entry name" value="ATCASE"/>
</dbReference>
<dbReference type="SUPFAM" id="SSF53671">
    <property type="entry name" value="Aspartate/ornithine carbamoyltransferase"/>
    <property type="match status" value="1"/>
</dbReference>
<dbReference type="PROSITE" id="PS00097">
    <property type="entry name" value="CARBAMOYLTRANSFERASE"/>
    <property type="match status" value="1"/>
</dbReference>
<evidence type="ECO:0000255" key="1">
    <source>
        <dbReference type="HAMAP-Rule" id="MF_00001"/>
    </source>
</evidence>
<keyword id="KW-0665">Pyrimidine biosynthesis</keyword>
<keyword id="KW-0808">Transferase</keyword>
<organism>
    <name type="scientific">Sulfurovum sp. (strain NBC37-1)</name>
    <dbReference type="NCBI Taxonomy" id="387093"/>
    <lineage>
        <taxon>Bacteria</taxon>
        <taxon>Pseudomonadati</taxon>
        <taxon>Campylobacterota</taxon>
        <taxon>Epsilonproteobacteria</taxon>
        <taxon>Campylobacterales</taxon>
        <taxon>Sulfurovaceae</taxon>
        <taxon>Sulfurovum</taxon>
    </lineage>
</organism>